<feature type="chain" id="PRO_0000272229" description="Tubby-like F-box protein 1">
    <location>
        <begin position="1"/>
        <end position="455"/>
    </location>
</feature>
<feature type="domain" description="F-box" evidence="1">
    <location>
        <begin position="54"/>
        <end position="112"/>
    </location>
</feature>
<feature type="region of interest" description="Disordered" evidence="2">
    <location>
        <begin position="386"/>
        <end position="414"/>
    </location>
</feature>
<feature type="compositionally biased region" description="Pro residues" evidence="2">
    <location>
        <begin position="388"/>
        <end position="402"/>
    </location>
</feature>
<protein>
    <recommendedName>
        <fullName evidence="4">Tubby-like F-box protein 1</fullName>
        <shortName evidence="4">AtTLP1</shortName>
    </recommendedName>
</protein>
<gene>
    <name evidence="5" type="primary">TULP1</name>
    <name evidence="4" type="synonym">TLP1</name>
    <name evidence="6" type="ordered locus">At1g76900</name>
    <name evidence="7" type="ORF">F22K20.1</name>
    <name evidence="8" type="ORF">F7O12.7</name>
</gene>
<sequence>MSFRSIVRDVRDSIGSLSRRSFDFKLSSLNKEGGKSRGSVQDSHEEQLVVTIQETPWANLPPELLRDVIKRLEESESVWPARRHVVACASVCRSWRDMCKEIVQSPELSGKITFPVSLKQPGPRDATMQCFIKRDKSNLTYHLYLCLSPALLVENGKFLLSAKRIRRTTYTEYVISMHADTISRSSNTYIGKIRSNFLGTKFIIYDTQPAYNSNIARAVQPVGLSRRFYSKRVSPKVPSGSYKIAQVSYELNVLGTRGPRRMHCAMNSIPASSLAEGGTVPGQPDIIVPRSILDESFRSITSSSSRKITYDYSNDFSSARFSDILGPLSEDQEVVLEEGKERNSPPLVLKNKPPRWHEQLQCWCLNFRGRVTVASVKNFQLIAANQPQPQPQPQPQPQPLTQPQPSGQTDGPDKIILQFGKVGKDMFTMDFRYPLSAFQAFAICLSSFDTKLACE</sequence>
<proteinExistence type="evidence at protein level"/>
<evidence type="ECO:0000255" key="1">
    <source>
        <dbReference type="PROSITE-ProRule" id="PRU00080"/>
    </source>
</evidence>
<evidence type="ECO:0000256" key="2">
    <source>
        <dbReference type="SAM" id="MobiDB-lite"/>
    </source>
</evidence>
<evidence type="ECO:0000269" key="3">
    <source>
    </source>
</evidence>
<evidence type="ECO:0000303" key="4">
    <source>
    </source>
</evidence>
<evidence type="ECO:0000305" key="5"/>
<evidence type="ECO:0000312" key="6">
    <source>
        <dbReference type="Araport" id="AT1G76900"/>
    </source>
</evidence>
<evidence type="ECO:0000312" key="7">
    <source>
        <dbReference type="EMBL" id="AAC00626.1"/>
    </source>
</evidence>
<evidence type="ECO:0000312" key="8">
    <source>
        <dbReference type="EMBL" id="AAG51146.1"/>
    </source>
</evidence>
<organism>
    <name type="scientific">Arabidopsis thaliana</name>
    <name type="common">Mouse-ear cress</name>
    <dbReference type="NCBI Taxonomy" id="3702"/>
    <lineage>
        <taxon>Eukaryota</taxon>
        <taxon>Viridiplantae</taxon>
        <taxon>Streptophyta</taxon>
        <taxon>Embryophyta</taxon>
        <taxon>Tracheophyta</taxon>
        <taxon>Spermatophyta</taxon>
        <taxon>Magnoliopsida</taxon>
        <taxon>eudicotyledons</taxon>
        <taxon>Gunneridae</taxon>
        <taxon>Pentapetalae</taxon>
        <taxon>rosids</taxon>
        <taxon>malvids</taxon>
        <taxon>Brassicales</taxon>
        <taxon>Brassicaceae</taxon>
        <taxon>Camelineae</taxon>
        <taxon>Arabidopsis</taxon>
    </lineage>
</organism>
<dbReference type="EMBL" id="AF487267">
    <property type="protein sequence ID" value="AAQ06240.1"/>
    <property type="molecule type" value="mRNA"/>
</dbReference>
<dbReference type="EMBL" id="AC002291">
    <property type="protein sequence ID" value="AAC00626.1"/>
    <property type="molecule type" value="Genomic_DNA"/>
</dbReference>
<dbReference type="EMBL" id="AC079283">
    <property type="protein sequence ID" value="AAG51146.1"/>
    <property type="molecule type" value="Genomic_DNA"/>
</dbReference>
<dbReference type="EMBL" id="CP002684">
    <property type="protein sequence ID" value="AEE35900.1"/>
    <property type="molecule type" value="Genomic_DNA"/>
</dbReference>
<dbReference type="EMBL" id="CP002684">
    <property type="protein sequence ID" value="AEE35901.1"/>
    <property type="molecule type" value="Genomic_DNA"/>
</dbReference>
<dbReference type="EMBL" id="CP002684">
    <property type="protein sequence ID" value="ANM61194.1"/>
    <property type="molecule type" value="Genomic_DNA"/>
</dbReference>
<dbReference type="EMBL" id="AY139758">
    <property type="protein sequence ID" value="AAM98079.1"/>
    <property type="molecule type" value="mRNA"/>
</dbReference>
<dbReference type="EMBL" id="BT003039">
    <property type="protein sequence ID" value="AAO23604.1"/>
    <property type="molecule type" value="mRNA"/>
</dbReference>
<dbReference type="PIR" id="H96797">
    <property type="entry name" value="H96797"/>
</dbReference>
<dbReference type="RefSeq" id="NP_001319391.1">
    <property type="nucleotide sequence ID" value="NM_001334747.1"/>
</dbReference>
<dbReference type="RefSeq" id="NP_177816.1">
    <property type="nucleotide sequence ID" value="NM_106341.2"/>
</dbReference>
<dbReference type="RefSeq" id="NP_849894.1">
    <property type="nucleotide sequence ID" value="NM_179563.3"/>
</dbReference>
<dbReference type="SMR" id="Q9ZP59"/>
<dbReference type="BioGRID" id="29244">
    <property type="interactions" value="5"/>
</dbReference>
<dbReference type="FunCoup" id="Q9ZP59">
    <property type="interactions" value="760"/>
</dbReference>
<dbReference type="IntAct" id="Q9ZP59">
    <property type="interactions" value="3"/>
</dbReference>
<dbReference type="STRING" id="3702.Q9ZP59"/>
<dbReference type="GlyGen" id="Q9ZP59">
    <property type="glycosylation" value="1 site"/>
</dbReference>
<dbReference type="iPTMnet" id="Q9ZP59"/>
<dbReference type="PaxDb" id="3702-AT1G76900.2"/>
<dbReference type="ProteomicsDB" id="234618"/>
<dbReference type="EnsemblPlants" id="AT1G76900.1">
    <property type="protein sequence ID" value="AT1G76900.1"/>
    <property type="gene ID" value="AT1G76900"/>
</dbReference>
<dbReference type="EnsemblPlants" id="AT1G76900.2">
    <property type="protein sequence ID" value="AT1G76900.2"/>
    <property type="gene ID" value="AT1G76900"/>
</dbReference>
<dbReference type="EnsemblPlants" id="AT1G76900.3">
    <property type="protein sequence ID" value="AT1G76900.3"/>
    <property type="gene ID" value="AT1G76900"/>
</dbReference>
<dbReference type="GeneID" id="844025"/>
<dbReference type="Gramene" id="AT1G76900.1">
    <property type="protein sequence ID" value="AT1G76900.1"/>
    <property type="gene ID" value="AT1G76900"/>
</dbReference>
<dbReference type="Gramene" id="AT1G76900.2">
    <property type="protein sequence ID" value="AT1G76900.2"/>
    <property type="gene ID" value="AT1G76900"/>
</dbReference>
<dbReference type="Gramene" id="AT1G76900.3">
    <property type="protein sequence ID" value="AT1G76900.3"/>
    <property type="gene ID" value="AT1G76900"/>
</dbReference>
<dbReference type="KEGG" id="ath:AT1G76900"/>
<dbReference type="Araport" id="AT1G76900"/>
<dbReference type="TAIR" id="AT1G76900">
    <property type="gene designation" value="TLP1"/>
</dbReference>
<dbReference type="eggNOG" id="KOG2502">
    <property type="taxonomic scope" value="Eukaryota"/>
</dbReference>
<dbReference type="HOGENOM" id="CLU_028236_3_0_1"/>
<dbReference type="InParanoid" id="Q9ZP59"/>
<dbReference type="OMA" id="HCAMNSI"/>
<dbReference type="PhylomeDB" id="Q9ZP59"/>
<dbReference type="PRO" id="PR:Q9ZP59"/>
<dbReference type="Proteomes" id="UP000006548">
    <property type="component" value="Chromosome 1"/>
</dbReference>
<dbReference type="ExpressionAtlas" id="Q9ZP59">
    <property type="expression patterns" value="baseline and differential"/>
</dbReference>
<dbReference type="GO" id="GO:0005886">
    <property type="term" value="C:plasma membrane"/>
    <property type="evidence" value="ECO:0000314"/>
    <property type="project" value="TAIR"/>
</dbReference>
<dbReference type="GO" id="GO:0000976">
    <property type="term" value="F:transcription cis-regulatory region binding"/>
    <property type="evidence" value="ECO:0000353"/>
    <property type="project" value="TAIR"/>
</dbReference>
<dbReference type="GO" id="GO:0006355">
    <property type="term" value="P:regulation of DNA-templated transcription"/>
    <property type="evidence" value="ECO:0000304"/>
    <property type="project" value="TAIR"/>
</dbReference>
<dbReference type="CDD" id="cd22153">
    <property type="entry name" value="F-box_AtTLP-like"/>
    <property type="match status" value="1"/>
</dbReference>
<dbReference type="FunFam" id="1.20.1280.50:FF:000047">
    <property type="entry name" value="Tubby-like F-box protein"/>
    <property type="match status" value="1"/>
</dbReference>
<dbReference type="Gene3D" id="1.20.1280.50">
    <property type="match status" value="1"/>
</dbReference>
<dbReference type="Gene3D" id="3.20.90.10">
    <property type="entry name" value="Tubby Protein, Chain A"/>
    <property type="match status" value="2"/>
</dbReference>
<dbReference type="InterPro" id="IPR036047">
    <property type="entry name" value="F-box-like_dom_sf"/>
</dbReference>
<dbReference type="InterPro" id="IPR001810">
    <property type="entry name" value="F-box_dom"/>
</dbReference>
<dbReference type="InterPro" id="IPR025659">
    <property type="entry name" value="Tubby-like_C"/>
</dbReference>
<dbReference type="InterPro" id="IPR000007">
    <property type="entry name" value="Tubby_C"/>
</dbReference>
<dbReference type="InterPro" id="IPR018066">
    <property type="entry name" value="Tubby_C_CS"/>
</dbReference>
<dbReference type="PANTHER" id="PTHR16517:SF86">
    <property type="entry name" value="TUBBY-LIKE F-BOX PROTEIN 1"/>
    <property type="match status" value="1"/>
</dbReference>
<dbReference type="PANTHER" id="PTHR16517">
    <property type="entry name" value="TUBBY-RELATED"/>
    <property type="match status" value="1"/>
</dbReference>
<dbReference type="Pfam" id="PF12937">
    <property type="entry name" value="F-box-like"/>
    <property type="match status" value="1"/>
</dbReference>
<dbReference type="Pfam" id="PF01167">
    <property type="entry name" value="Tub"/>
    <property type="match status" value="1"/>
</dbReference>
<dbReference type="PRINTS" id="PR01573">
    <property type="entry name" value="SUPERTUBBY"/>
</dbReference>
<dbReference type="SUPFAM" id="SSF81383">
    <property type="entry name" value="F-box domain"/>
    <property type="match status" value="1"/>
</dbReference>
<dbReference type="SUPFAM" id="SSF54518">
    <property type="entry name" value="Tubby C-terminal domain-like"/>
    <property type="match status" value="1"/>
</dbReference>
<dbReference type="PROSITE" id="PS01200">
    <property type="entry name" value="TUB_1"/>
    <property type="match status" value="1"/>
</dbReference>
<dbReference type="PROSITE" id="PS01201">
    <property type="entry name" value="TUB_2"/>
    <property type="match status" value="1"/>
</dbReference>
<accession>Q9ZP59</accession>
<reference key="1">
    <citation type="journal article" date="2004" name="Plant Physiol.">
        <title>Molecular analyses of the Arabidopsis TUBBY-like protein gene family.</title>
        <authorList>
            <person name="Lai C.-P."/>
            <person name="Lee C.-L."/>
            <person name="Chen P.-H."/>
            <person name="Wu S.-H."/>
            <person name="Yang C.-C."/>
            <person name="Shaw J.-F."/>
        </authorList>
    </citation>
    <scope>NUCLEOTIDE SEQUENCE [MRNA]</scope>
    <scope>TISSUE SPECIFICITY</scope>
    <scope>GENE FAMILY</scope>
    <scope>NOMENCLATURE</scope>
</reference>
<reference key="2">
    <citation type="journal article" date="2000" name="Nature">
        <title>Sequence and analysis of chromosome 1 of the plant Arabidopsis thaliana.</title>
        <authorList>
            <person name="Theologis A."/>
            <person name="Ecker J.R."/>
            <person name="Palm C.J."/>
            <person name="Federspiel N.A."/>
            <person name="Kaul S."/>
            <person name="White O."/>
            <person name="Alonso J."/>
            <person name="Altafi H."/>
            <person name="Araujo R."/>
            <person name="Bowman C.L."/>
            <person name="Brooks S.Y."/>
            <person name="Buehler E."/>
            <person name="Chan A."/>
            <person name="Chao Q."/>
            <person name="Chen H."/>
            <person name="Cheuk R.F."/>
            <person name="Chin C.W."/>
            <person name="Chung M.K."/>
            <person name="Conn L."/>
            <person name="Conway A.B."/>
            <person name="Conway A.R."/>
            <person name="Creasy T.H."/>
            <person name="Dewar K."/>
            <person name="Dunn P."/>
            <person name="Etgu P."/>
            <person name="Feldblyum T.V."/>
            <person name="Feng J.-D."/>
            <person name="Fong B."/>
            <person name="Fujii C.Y."/>
            <person name="Gill J.E."/>
            <person name="Goldsmith A.D."/>
            <person name="Haas B."/>
            <person name="Hansen N.F."/>
            <person name="Hughes B."/>
            <person name="Huizar L."/>
            <person name="Hunter J.L."/>
            <person name="Jenkins J."/>
            <person name="Johnson-Hopson C."/>
            <person name="Khan S."/>
            <person name="Khaykin E."/>
            <person name="Kim C.J."/>
            <person name="Koo H.L."/>
            <person name="Kremenetskaia I."/>
            <person name="Kurtz D.B."/>
            <person name="Kwan A."/>
            <person name="Lam B."/>
            <person name="Langin-Hooper S."/>
            <person name="Lee A."/>
            <person name="Lee J.M."/>
            <person name="Lenz C.A."/>
            <person name="Li J.H."/>
            <person name="Li Y.-P."/>
            <person name="Lin X."/>
            <person name="Liu S.X."/>
            <person name="Liu Z.A."/>
            <person name="Luros J.S."/>
            <person name="Maiti R."/>
            <person name="Marziali A."/>
            <person name="Militscher J."/>
            <person name="Miranda M."/>
            <person name="Nguyen M."/>
            <person name="Nierman W.C."/>
            <person name="Osborne B.I."/>
            <person name="Pai G."/>
            <person name="Peterson J."/>
            <person name="Pham P.K."/>
            <person name="Rizzo M."/>
            <person name="Rooney T."/>
            <person name="Rowley D."/>
            <person name="Sakano H."/>
            <person name="Salzberg S.L."/>
            <person name="Schwartz J.R."/>
            <person name="Shinn P."/>
            <person name="Southwick A.M."/>
            <person name="Sun H."/>
            <person name="Tallon L.J."/>
            <person name="Tambunga G."/>
            <person name="Toriumi M.J."/>
            <person name="Town C.D."/>
            <person name="Utterback T."/>
            <person name="Van Aken S."/>
            <person name="Vaysberg M."/>
            <person name="Vysotskaia V.S."/>
            <person name="Walker M."/>
            <person name="Wu D."/>
            <person name="Yu G."/>
            <person name="Fraser C.M."/>
            <person name="Venter J.C."/>
            <person name="Davis R.W."/>
        </authorList>
    </citation>
    <scope>NUCLEOTIDE SEQUENCE [LARGE SCALE GENOMIC DNA]</scope>
    <source>
        <strain>cv. Columbia</strain>
    </source>
</reference>
<reference key="3">
    <citation type="journal article" date="2017" name="Plant J.">
        <title>Araport11: a complete reannotation of the Arabidopsis thaliana reference genome.</title>
        <authorList>
            <person name="Cheng C.Y."/>
            <person name="Krishnakumar V."/>
            <person name="Chan A.P."/>
            <person name="Thibaud-Nissen F."/>
            <person name="Schobel S."/>
            <person name="Town C.D."/>
        </authorList>
    </citation>
    <scope>GENOME REANNOTATION</scope>
    <source>
        <strain>cv. Columbia</strain>
    </source>
</reference>
<reference key="4">
    <citation type="journal article" date="2003" name="Science">
        <title>Empirical analysis of transcriptional activity in the Arabidopsis genome.</title>
        <authorList>
            <person name="Yamada K."/>
            <person name="Lim J."/>
            <person name="Dale J.M."/>
            <person name="Chen H."/>
            <person name="Shinn P."/>
            <person name="Palm C.J."/>
            <person name="Southwick A.M."/>
            <person name="Wu H.C."/>
            <person name="Kim C.J."/>
            <person name="Nguyen M."/>
            <person name="Pham P.K."/>
            <person name="Cheuk R.F."/>
            <person name="Karlin-Newmann G."/>
            <person name="Liu S.X."/>
            <person name="Lam B."/>
            <person name="Sakano H."/>
            <person name="Wu T."/>
            <person name="Yu G."/>
            <person name="Miranda M."/>
            <person name="Quach H.L."/>
            <person name="Tripp M."/>
            <person name="Chang C.H."/>
            <person name="Lee J.M."/>
            <person name="Toriumi M.J."/>
            <person name="Chan M.M."/>
            <person name="Tang C.C."/>
            <person name="Onodera C.S."/>
            <person name="Deng J.M."/>
            <person name="Akiyama K."/>
            <person name="Ansari Y."/>
            <person name="Arakawa T."/>
            <person name="Banh J."/>
            <person name="Banno F."/>
            <person name="Bowser L."/>
            <person name="Brooks S.Y."/>
            <person name="Carninci P."/>
            <person name="Chao Q."/>
            <person name="Choy N."/>
            <person name="Enju A."/>
            <person name="Goldsmith A.D."/>
            <person name="Gurjal M."/>
            <person name="Hansen N.F."/>
            <person name="Hayashizaki Y."/>
            <person name="Johnson-Hopson C."/>
            <person name="Hsuan V.W."/>
            <person name="Iida K."/>
            <person name="Karnes M."/>
            <person name="Khan S."/>
            <person name="Koesema E."/>
            <person name="Ishida J."/>
            <person name="Jiang P.X."/>
            <person name="Jones T."/>
            <person name="Kawai J."/>
            <person name="Kamiya A."/>
            <person name="Meyers C."/>
            <person name="Nakajima M."/>
            <person name="Narusaka M."/>
            <person name="Seki M."/>
            <person name="Sakurai T."/>
            <person name="Satou M."/>
            <person name="Tamse R."/>
            <person name="Vaysberg M."/>
            <person name="Wallender E.K."/>
            <person name="Wong C."/>
            <person name="Yamamura Y."/>
            <person name="Yuan S."/>
            <person name="Shinozaki K."/>
            <person name="Davis R.W."/>
            <person name="Theologis A."/>
            <person name="Ecker J.R."/>
        </authorList>
    </citation>
    <scope>NUCLEOTIDE SEQUENCE [LARGE SCALE MRNA]</scope>
    <source>
        <strain>cv. Columbia</strain>
    </source>
</reference>
<name>TLP1_ARATH</name>
<comment type="interaction">
    <interactant intactId="EBI-4476686">
        <id>Q9ZP59</id>
    </interactant>
    <interactant intactId="EBI-963647">
        <id>Q9C8Y3</id>
        <label>RGL1</label>
    </interactant>
    <organismsDiffer>false</organismsDiffer>
    <experiments>3</experiments>
</comment>
<comment type="tissue specificity">
    <text evidence="3">Ubiquitous.</text>
</comment>
<comment type="similarity">
    <text evidence="5">Belongs to the TUB family.</text>
</comment>
<keyword id="KW-1185">Reference proteome</keyword>